<sequence>MISSAATFRQHQEILVIATQGKSLHNFNSKIQAVVQHSGVKTGLCTVFVRHTSASLIIQENADPDVLTDLAIFFAQLVPEDGRRYRHSTEGLDDMPAHIRSALTKTSEHIPIVNGRLGLGTWQGVFLWEHRQRPHQREVIVHVSGEV</sequence>
<feature type="chain" id="PRO_0000088522" description="UPF0047 protein sll1880">
    <location>
        <begin position="1"/>
        <end position="147"/>
    </location>
</feature>
<comment type="similarity">
    <text evidence="1">Belongs to the UPF0047 family.</text>
</comment>
<proteinExistence type="inferred from homology"/>
<dbReference type="EMBL" id="BA000022">
    <property type="protein sequence ID" value="BAA18211.1"/>
    <property type="molecule type" value="Genomic_DNA"/>
</dbReference>
<dbReference type="PIR" id="S75650">
    <property type="entry name" value="S75650"/>
</dbReference>
<dbReference type="SMR" id="P74125"/>
<dbReference type="FunCoup" id="P74125">
    <property type="interactions" value="265"/>
</dbReference>
<dbReference type="IntAct" id="P74125">
    <property type="interactions" value="2"/>
</dbReference>
<dbReference type="PaxDb" id="1148-1653296"/>
<dbReference type="EnsemblBacteria" id="BAA18211">
    <property type="protein sequence ID" value="BAA18211"/>
    <property type="gene ID" value="BAA18211"/>
</dbReference>
<dbReference type="KEGG" id="syn:sll1880"/>
<dbReference type="eggNOG" id="COG0432">
    <property type="taxonomic scope" value="Bacteria"/>
</dbReference>
<dbReference type="InParanoid" id="P74125"/>
<dbReference type="PhylomeDB" id="P74125"/>
<dbReference type="Proteomes" id="UP000001425">
    <property type="component" value="Chromosome"/>
</dbReference>
<dbReference type="Gene3D" id="2.60.120.460">
    <property type="entry name" value="YjbQ-like"/>
    <property type="match status" value="1"/>
</dbReference>
<dbReference type="InterPro" id="IPR001602">
    <property type="entry name" value="UPF0047_YjbQ-like"/>
</dbReference>
<dbReference type="InterPro" id="IPR035917">
    <property type="entry name" value="YjbQ-like_sf"/>
</dbReference>
<dbReference type="NCBIfam" id="TIGR00149">
    <property type="entry name" value="TIGR00149_YjbQ"/>
    <property type="match status" value="1"/>
</dbReference>
<dbReference type="PANTHER" id="PTHR30615">
    <property type="entry name" value="UNCHARACTERIZED PROTEIN YJBQ-RELATED"/>
    <property type="match status" value="1"/>
</dbReference>
<dbReference type="PANTHER" id="PTHR30615:SF8">
    <property type="entry name" value="UPF0047 PROTEIN C4A8.02C"/>
    <property type="match status" value="1"/>
</dbReference>
<dbReference type="Pfam" id="PF01894">
    <property type="entry name" value="UPF0047"/>
    <property type="match status" value="1"/>
</dbReference>
<dbReference type="PIRSF" id="PIRSF004681">
    <property type="entry name" value="UCP004681"/>
    <property type="match status" value="1"/>
</dbReference>
<dbReference type="SUPFAM" id="SSF111038">
    <property type="entry name" value="YjbQ-like"/>
    <property type="match status" value="1"/>
</dbReference>
<dbReference type="PROSITE" id="PS01314">
    <property type="entry name" value="UPF0047"/>
    <property type="match status" value="1"/>
</dbReference>
<accession>P74125</accession>
<organism>
    <name type="scientific">Synechocystis sp. (strain ATCC 27184 / PCC 6803 / Kazusa)</name>
    <dbReference type="NCBI Taxonomy" id="1111708"/>
    <lineage>
        <taxon>Bacteria</taxon>
        <taxon>Bacillati</taxon>
        <taxon>Cyanobacteriota</taxon>
        <taxon>Cyanophyceae</taxon>
        <taxon>Synechococcales</taxon>
        <taxon>Merismopediaceae</taxon>
        <taxon>Synechocystis</taxon>
    </lineage>
</organism>
<protein>
    <recommendedName>
        <fullName>UPF0047 protein sll1880</fullName>
    </recommendedName>
</protein>
<name>Y1880_SYNY3</name>
<keyword id="KW-1185">Reference proteome</keyword>
<evidence type="ECO:0000305" key="1"/>
<gene>
    <name type="ordered locus">sll1880</name>
</gene>
<reference key="1">
    <citation type="journal article" date="1996" name="DNA Res.">
        <title>Sequence analysis of the genome of the unicellular cyanobacterium Synechocystis sp. strain PCC6803. II. Sequence determination of the entire genome and assignment of potential protein-coding regions.</title>
        <authorList>
            <person name="Kaneko T."/>
            <person name="Sato S."/>
            <person name="Kotani H."/>
            <person name="Tanaka A."/>
            <person name="Asamizu E."/>
            <person name="Nakamura Y."/>
            <person name="Miyajima N."/>
            <person name="Hirosawa M."/>
            <person name="Sugiura M."/>
            <person name="Sasamoto S."/>
            <person name="Kimura T."/>
            <person name="Hosouchi T."/>
            <person name="Matsuno A."/>
            <person name="Muraki A."/>
            <person name="Nakazaki N."/>
            <person name="Naruo K."/>
            <person name="Okumura S."/>
            <person name="Shimpo S."/>
            <person name="Takeuchi C."/>
            <person name="Wada T."/>
            <person name="Watanabe A."/>
            <person name="Yamada M."/>
            <person name="Yasuda M."/>
            <person name="Tabata S."/>
        </authorList>
    </citation>
    <scope>NUCLEOTIDE SEQUENCE [LARGE SCALE GENOMIC DNA]</scope>
    <source>
        <strain>ATCC 27184 / PCC 6803 / Kazusa</strain>
    </source>
</reference>